<comment type="similarity">
    <text evidence="1">Belongs to the eukaryotic ribosomal protein eL31 family.</text>
</comment>
<gene>
    <name type="primary">RpL31</name>
    <name type="synonym">RPG</name>
</gene>
<reference key="1">
    <citation type="submission" date="1997-03" db="EMBL/GenBank/DDBJ databases">
        <authorList>
            <person name="Gao L."/>
            <person name="Wang S."/>
            <person name="Hickey D.A."/>
        </authorList>
    </citation>
    <scope>NUCLEOTIDE SEQUENCE [GENOMIC DNA]</scope>
</reference>
<evidence type="ECO:0000305" key="1"/>
<accession>O18602</accession>
<feature type="chain" id="PRO_0000153772" description="Large ribosomal subunit protein eL31">
    <location>
        <begin position="1"/>
        <end position="128"/>
    </location>
</feature>
<keyword id="KW-0687">Ribonucleoprotein</keyword>
<keyword id="KW-0689">Ribosomal protein</keyword>
<name>RL31_DROVI</name>
<sequence length="128" mass="15054">MAKTKGEKRNKSAINEVVTRECTIHLAKRVHNIGFKKRAPRAIKEIRKFTEREMGTNDVRIDTRLNKHIWSKGISLRYRSTPFRVRVRLARRRNDDEDSPNKLYTLVTYVPVPTFKNLQTENVESSDD</sequence>
<organism>
    <name type="scientific">Drosophila virilis</name>
    <name type="common">Fruit fly</name>
    <dbReference type="NCBI Taxonomy" id="7244"/>
    <lineage>
        <taxon>Eukaryota</taxon>
        <taxon>Metazoa</taxon>
        <taxon>Ecdysozoa</taxon>
        <taxon>Arthropoda</taxon>
        <taxon>Hexapoda</taxon>
        <taxon>Insecta</taxon>
        <taxon>Pterygota</taxon>
        <taxon>Neoptera</taxon>
        <taxon>Endopterygota</taxon>
        <taxon>Diptera</taxon>
        <taxon>Brachycera</taxon>
        <taxon>Muscomorpha</taxon>
        <taxon>Ephydroidea</taxon>
        <taxon>Drosophilidae</taxon>
        <taxon>Drosophila</taxon>
    </lineage>
</organism>
<dbReference type="EMBL" id="U93213">
    <property type="protein sequence ID" value="AAB66373.1"/>
    <property type="molecule type" value="Genomic_DNA"/>
</dbReference>
<dbReference type="SMR" id="O18602"/>
<dbReference type="eggNOG" id="KOG0893">
    <property type="taxonomic scope" value="Eukaryota"/>
</dbReference>
<dbReference type="OrthoDB" id="9739313at2759"/>
<dbReference type="ChiTaRS" id="RpL31">
    <property type="organism name" value="fly"/>
</dbReference>
<dbReference type="GO" id="GO:0022625">
    <property type="term" value="C:cytosolic large ribosomal subunit"/>
    <property type="evidence" value="ECO:0007669"/>
    <property type="project" value="TreeGrafter"/>
</dbReference>
<dbReference type="GO" id="GO:0003735">
    <property type="term" value="F:structural constituent of ribosome"/>
    <property type="evidence" value="ECO:0007669"/>
    <property type="project" value="EnsemblMetazoa"/>
</dbReference>
<dbReference type="GO" id="GO:0002181">
    <property type="term" value="P:cytoplasmic translation"/>
    <property type="evidence" value="ECO:0007669"/>
    <property type="project" value="TreeGrafter"/>
</dbReference>
<dbReference type="CDD" id="cd00463">
    <property type="entry name" value="Ribosomal_L31e"/>
    <property type="match status" value="1"/>
</dbReference>
<dbReference type="FunFam" id="3.10.440.10:FF:000001">
    <property type="entry name" value="60S ribosomal protein L31"/>
    <property type="match status" value="1"/>
</dbReference>
<dbReference type="Gene3D" id="3.10.440.10">
    <property type="match status" value="1"/>
</dbReference>
<dbReference type="InterPro" id="IPR000054">
    <property type="entry name" value="Ribosomal_eL31"/>
</dbReference>
<dbReference type="InterPro" id="IPR020052">
    <property type="entry name" value="Ribosomal_eL31_CS"/>
</dbReference>
<dbReference type="InterPro" id="IPR023621">
    <property type="entry name" value="Ribosomal_eL31_dom_sf"/>
</dbReference>
<dbReference type="PANTHER" id="PTHR10956">
    <property type="entry name" value="60S RIBOSOMAL PROTEIN L31"/>
    <property type="match status" value="1"/>
</dbReference>
<dbReference type="PANTHER" id="PTHR10956:SF0">
    <property type="entry name" value="60S RIBOSOMAL PROTEIN L31"/>
    <property type="match status" value="1"/>
</dbReference>
<dbReference type="Pfam" id="PF01198">
    <property type="entry name" value="Ribosomal_L31e"/>
    <property type="match status" value="1"/>
</dbReference>
<dbReference type="SMART" id="SM01380">
    <property type="entry name" value="Ribosomal_L31e"/>
    <property type="match status" value="1"/>
</dbReference>
<dbReference type="SUPFAM" id="SSF54575">
    <property type="entry name" value="Ribosomal protein L31e"/>
    <property type="match status" value="1"/>
</dbReference>
<dbReference type="PROSITE" id="PS01144">
    <property type="entry name" value="RIBOSOMAL_L31E"/>
    <property type="match status" value="1"/>
</dbReference>
<proteinExistence type="inferred from homology"/>
<protein>
    <recommendedName>
        <fullName evidence="1">Large ribosomal subunit protein eL31</fullName>
    </recommendedName>
    <alternativeName>
        <fullName>60S ribosomal protein L31</fullName>
    </alternativeName>
</protein>